<sequence>MSVLKKPDLTDPKLRAKLAKGMGHNYYGEPAWPNDLLYIFPVVILGTLACVIGLSVLAPSPIGEKADPFATPLEILPEWYFFPTFNLLRVIPNKLLGVLSMAAVPVGLITVPFIESVNKFQNPFRRPVAMTVFVFSVVFAIWLGIGATMPINKALTLGLF</sequence>
<accession>O78415</accession>
<dbReference type="EMBL" id="AF041468">
    <property type="protein sequence ID" value="AAC35600.1"/>
    <property type="molecule type" value="Genomic_DNA"/>
</dbReference>
<dbReference type="RefSeq" id="NP_050666.1">
    <property type="nucleotide sequence ID" value="NC_000926.1"/>
</dbReference>
<dbReference type="SMR" id="O78415"/>
<dbReference type="GeneID" id="856952"/>
<dbReference type="HOGENOM" id="CLU_112652_0_0_1"/>
<dbReference type="OMA" id="KKGMGHN"/>
<dbReference type="GO" id="GO:0009535">
    <property type="term" value="C:chloroplast thylakoid membrane"/>
    <property type="evidence" value="ECO:0007669"/>
    <property type="project" value="UniProtKB-SubCell"/>
</dbReference>
<dbReference type="GO" id="GO:0045158">
    <property type="term" value="F:electron transporter, transferring electrons within cytochrome b6/f complex of photosystem II activity"/>
    <property type="evidence" value="ECO:0007669"/>
    <property type="project" value="UniProtKB-UniRule"/>
</dbReference>
<dbReference type="GO" id="GO:0045156">
    <property type="term" value="F:electron transporter, transferring electrons within the cyclic electron transport pathway of photosynthesis activity"/>
    <property type="evidence" value="ECO:0007669"/>
    <property type="project" value="InterPro"/>
</dbReference>
<dbReference type="GO" id="GO:0016491">
    <property type="term" value="F:oxidoreductase activity"/>
    <property type="evidence" value="ECO:0007669"/>
    <property type="project" value="InterPro"/>
</dbReference>
<dbReference type="GO" id="GO:0009767">
    <property type="term" value="P:photosynthetic electron transport chain"/>
    <property type="evidence" value="ECO:0007669"/>
    <property type="project" value="InterPro"/>
</dbReference>
<dbReference type="CDD" id="cd00290">
    <property type="entry name" value="cytochrome_b_C"/>
    <property type="match status" value="1"/>
</dbReference>
<dbReference type="FunFam" id="1.10.287.980:FF:000001">
    <property type="entry name" value="Cytochrome b6-f complex subunit 4"/>
    <property type="match status" value="1"/>
</dbReference>
<dbReference type="FunFam" id="1.20.5.510:FF:000002">
    <property type="entry name" value="Cytochrome b6-f complex subunit 4"/>
    <property type="match status" value="1"/>
</dbReference>
<dbReference type="Gene3D" id="1.10.287.980">
    <property type="entry name" value="plastocyanin oxidoreductase"/>
    <property type="match status" value="1"/>
</dbReference>
<dbReference type="Gene3D" id="1.20.5.510">
    <property type="entry name" value="Single helix bin"/>
    <property type="match status" value="1"/>
</dbReference>
<dbReference type="HAMAP" id="MF_01344">
    <property type="entry name" value="Cytb6_f_subIV"/>
    <property type="match status" value="1"/>
</dbReference>
<dbReference type="InterPro" id="IPR005798">
    <property type="entry name" value="Cyt_b/b6_C"/>
</dbReference>
<dbReference type="InterPro" id="IPR036150">
    <property type="entry name" value="Cyt_b/b6_C_sf"/>
</dbReference>
<dbReference type="InterPro" id="IPR005870">
    <property type="entry name" value="Cyt_b6/f_cplx_suIV"/>
</dbReference>
<dbReference type="InterPro" id="IPR048260">
    <property type="entry name" value="Cytochrome_b_C_euk/bac"/>
</dbReference>
<dbReference type="NCBIfam" id="TIGR01156">
    <property type="entry name" value="cytb6_f_IV"/>
    <property type="match status" value="1"/>
</dbReference>
<dbReference type="PANTHER" id="PTHR19271">
    <property type="entry name" value="CYTOCHROME B"/>
    <property type="match status" value="1"/>
</dbReference>
<dbReference type="PANTHER" id="PTHR19271:SF16">
    <property type="entry name" value="CYTOCHROME B"/>
    <property type="match status" value="1"/>
</dbReference>
<dbReference type="Pfam" id="PF00032">
    <property type="entry name" value="Cytochrom_B_C"/>
    <property type="match status" value="1"/>
</dbReference>
<dbReference type="PIRSF" id="PIRSF000033">
    <property type="entry name" value="B6f_17K"/>
    <property type="match status" value="1"/>
</dbReference>
<dbReference type="SUPFAM" id="SSF81648">
    <property type="entry name" value="a domain/subunit of cytochrome bc1 complex (Ubiquinol-cytochrome c reductase)"/>
    <property type="match status" value="1"/>
</dbReference>
<dbReference type="PROSITE" id="PS51003">
    <property type="entry name" value="CYTB_CTER"/>
    <property type="match status" value="1"/>
</dbReference>
<organism>
    <name type="scientific">Guillardia theta</name>
    <name type="common">Cryptophyte</name>
    <name type="synonym">Cryptomonas phi</name>
    <dbReference type="NCBI Taxonomy" id="55529"/>
    <lineage>
        <taxon>Eukaryota</taxon>
        <taxon>Cryptophyceae</taxon>
        <taxon>Pyrenomonadales</taxon>
        <taxon>Geminigeraceae</taxon>
        <taxon>Guillardia</taxon>
    </lineage>
</organism>
<keyword id="KW-0150">Chloroplast</keyword>
<keyword id="KW-0249">Electron transport</keyword>
<keyword id="KW-0472">Membrane</keyword>
<keyword id="KW-0602">Photosynthesis</keyword>
<keyword id="KW-0934">Plastid</keyword>
<keyword id="KW-0793">Thylakoid</keyword>
<keyword id="KW-0812">Transmembrane</keyword>
<keyword id="KW-1133">Transmembrane helix</keyword>
<keyword id="KW-0813">Transport</keyword>
<gene>
    <name evidence="2" type="primary">petD</name>
</gene>
<name>PETD_GUITH</name>
<proteinExistence type="inferred from homology"/>
<evidence type="ECO:0000250" key="1"/>
<evidence type="ECO:0000255" key="2">
    <source>
        <dbReference type="HAMAP-Rule" id="MF_01344"/>
    </source>
</evidence>
<geneLocation type="chloroplast"/>
<comment type="function">
    <text evidence="2">Component of the cytochrome b6-f complex, which mediates electron transfer between photosystem II (PSII) and photosystem I (PSI), cyclic electron flow around PSI, and state transitions.</text>
</comment>
<comment type="subunit">
    <text evidence="1">The 4 large subunits of the cytochrome b6-f complex are cytochrome b6, subunit IV (17 kDa polypeptide, petD), cytochrome f and the Rieske protein, while the 4 small subunits are petG, petL, petM and petN. The complex functions as a dimer (By similarity).</text>
</comment>
<comment type="subcellular location">
    <subcellularLocation>
        <location evidence="2">Plastid</location>
        <location evidence="2">Chloroplast thylakoid membrane</location>
        <topology evidence="2">Multi-pass membrane protein</topology>
    </subcellularLocation>
</comment>
<comment type="similarity">
    <text evidence="2">Belongs to the cytochrome b family. PetD subfamily.</text>
</comment>
<reference key="1">
    <citation type="journal article" date="1999" name="J. Mol. Evol.">
        <title>The plastid genome of the cryptophyte alga, Guillardia theta: complete sequence and conserved synteny groups confirm its common ancestry with red algae.</title>
        <authorList>
            <person name="Douglas S.E."/>
            <person name="Penny S.L."/>
        </authorList>
    </citation>
    <scope>NUCLEOTIDE SEQUENCE [LARGE SCALE GENOMIC DNA]</scope>
</reference>
<feature type="chain" id="PRO_0000061862" description="Cytochrome b6-f complex subunit 4">
    <location>
        <begin position="1"/>
        <end position="160"/>
    </location>
</feature>
<feature type="transmembrane region" description="Helical" evidence="2">
    <location>
        <begin position="36"/>
        <end position="56"/>
    </location>
</feature>
<feature type="transmembrane region" description="Helical" evidence="2">
    <location>
        <begin position="95"/>
        <end position="115"/>
    </location>
</feature>
<feature type="transmembrane region" description="Helical" evidence="2">
    <location>
        <begin position="127"/>
        <end position="147"/>
    </location>
</feature>
<protein>
    <recommendedName>
        <fullName evidence="2">Cytochrome b6-f complex subunit 4</fullName>
    </recommendedName>
    <alternativeName>
        <fullName evidence="2">17 kDa polypeptide</fullName>
    </alternativeName>
</protein>